<evidence type="ECO:0000255" key="1">
    <source>
        <dbReference type="HAMAP-Rule" id="MF_01384"/>
    </source>
</evidence>
<evidence type="ECO:0000305" key="2"/>
<feature type="chain" id="PRO_0000067618" description="Urease accessory protein UreD">
    <location>
        <begin position="1"/>
        <end position="287"/>
    </location>
</feature>
<feature type="sequence conflict" description="In Ref. 2; AAA89193." evidence="2" ref="2">
    <original>I</original>
    <variation>V</variation>
    <location>
        <position position="70"/>
    </location>
</feature>
<feature type="sequence conflict" description="In Ref. 2; AAA89193." evidence="2" ref="2">
    <original>DAR</original>
    <variation>AAC</variation>
    <location>
        <begin position="80"/>
        <end position="82"/>
    </location>
</feature>
<feature type="sequence conflict" description="In Ref. 2." evidence="2" ref="2">
    <original>A</original>
    <variation>R</variation>
    <location>
        <position position="91"/>
    </location>
</feature>
<comment type="function">
    <text evidence="1">Required for maturation of urease via the functional incorporation of the urease nickel metallocenter.</text>
</comment>
<comment type="subunit">
    <text evidence="1">UreD, UreF and UreG form a complex that acts as a GTP-hydrolysis-dependent molecular chaperone, activating the urease apoprotein by helping to assemble the nickel containing metallocenter of UreC. The UreE protein probably delivers the nickel.</text>
</comment>
<comment type="subcellular location">
    <subcellularLocation>
        <location evidence="1">Cytoplasm</location>
    </subcellularLocation>
</comment>
<comment type="similarity">
    <text evidence="1">Belongs to the UreD family.</text>
</comment>
<proteinExistence type="inferred from homology"/>
<gene>
    <name evidence="1" type="primary">ureD</name>
    <name type="ordered locus">UU428</name>
</gene>
<protein>
    <recommendedName>
        <fullName evidence="1">Urease accessory protein UreD</fullName>
    </recommendedName>
</protein>
<sequence>MILNKEKIKNYAAYLYIKVAYDQAHSKMAHTVYFTNFYRSSKPLFLDEEDPINPCFQTISMGGGYVSGEIYRSDFEINDDARCIITTQSSAKAYKTVDGKTSEQHTNITLGKNSILEYISDNVIVYEDGKFAQFNNFKMDSSATLIYTECFGPGWSPHGSAYQYEKMYLNTKIYYDDKLVLFDNLKFQPRKNDESAFGIMDGYHYCGTMIVINQQVIEDDVIKIRDLVKEKYPDMDMIFGVSRMDIPGLGLRVLANTYYHVEKINAVAHDYFRRKLFNKKPLILRKP</sequence>
<accession>Q56562</accession>
<accession>Q9PQ60</accession>
<name>URED_UREPA</name>
<keyword id="KW-0143">Chaperone</keyword>
<keyword id="KW-0963">Cytoplasm</keyword>
<keyword id="KW-0996">Nickel insertion</keyword>
<keyword id="KW-1185">Reference proteome</keyword>
<reference key="1">
    <citation type="journal article" date="2000" name="Nature">
        <title>The complete sequence of the mucosal pathogen Ureaplasma urealyticum.</title>
        <authorList>
            <person name="Glass J.I."/>
            <person name="Lefkowitz E.J."/>
            <person name="Glass J.S."/>
            <person name="Heiner C.R."/>
            <person name="Chen E.Y."/>
            <person name="Cassell G.H."/>
        </authorList>
    </citation>
    <scope>NUCLEOTIDE SEQUENCE [LARGE SCALE GENOMIC DNA]</scope>
    <source>
        <strain>ATCC 700970</strain>
    </source>
</reference>
<reference key="2">
    <citation type="journal article" date="1996" name="J. Bacteriol.">
        <title>Organization of Ureaplasma urealyticum urease gene cluster and expression in a suppressor strain of Escherichia coli.</title>
        <authorList>
            <person name="Neyrolles O."/>
            <person name="Ferris S."/>
            <person name="Behbahani N."/>
            <person name="Montagnier L."/>
            <person name="Blanchard A."/>
        </authorList>
    </citation>
    <scope>NUCLEOTIDE SEQUENCE [GENOMIC DNA] OF 1-93</scope>
    <source>
        <strain>ATCC 27813 / 7 / Serovar 1</strain>
    </source>
</reference>
<organism>
    <name type="scientific">Ureaplasma parvum serovar 3 (strain ATCC 700970)</name>
    <dbReference type="NCBI Taxonomy" id="273119"/>
    <lineage>
        <taxon>Bacteria</taxon>
        <taxon>Bacillati</taxon>
        <taxon>Mycoplasmatota</taxon>
        <taxon>Mycoplasmoidales</taxon>
        <taxon>Mycoplasmoidaceae</taxon>
        <taxon>Ureaplasma</taxon>
    </lineage>
</organism>
<dbReference type="EMBL" id="AF222894">
    <property type="protein sequence ID" value="AAF30840.1"/>
    <property type="molecule type" value="Genomic_DNA"/>
</dbReference>
<dbReference type="EMBL" id="L40489">
    <property type="protein sequence ID" value="AAA89193.1"/>
    <property type="molecule type" value="Genomic_DNA"/>
</dbReference>
<dbReference type="PIR" id="F82893">
    <property type="entry name" value="F82893"/>
</dbReference>
<dbReference type="RefSeq" id="WP_006688613.1">
    <property type="nucleotide sequence ID" value="NC_002162.1"/>
</dbReference>
<dbReference type="SMR" id="Q56562"/>
<dbReference type="STRING" id="273119.UU428"/>
<dbReference type="EnsemblBacteria" id="AAF30840">
    <property type="protein sequence ID" value="AAF30840"/>
    <property type="gene ID" value="UU428"/>
</dbReference>
<dbReference type="GeneID" id="29672331"/>
<dbReference type="KEGG" id="uur:UU428"/>
<dbReference type="eggNOG" id="COG0829">
    <property type="taxonomic scope" value="Bacteria"/>
</dbReference>
<dbReference type="HOGENOM" id="CLU_056339_5_0_14"/>
<dbReference type="OrthoDB" id="9807968at2"/>
<dbReference type="Proteomes" id="UP000000423">
    <property type="component" value="Chromosome"/>
</dbReference>
<dbReference type="GO" id="GO:0005737">
    <property type="term" value="C:cytoplasm"/>
    <property type="evidence" value="ECO:0007669"/>
    <property type="project" value="UniProtKB-SubCell"/>
</dbReference>
<dbReference type="GO" id="GO:0016151">
    <property type="term" value="F:nickel cation binding"/>
    <property type="evidence" value="ECO:0007669"/>
    <property type="project" value="UniProtKB-UniRule"/>
</dbReference>
<dbReference type="HAMAP" id="MF_01384">
    <property type="entry name" value="UreD"/>
    <property type="match status" value="1"/>
</dbReference>
<dbReference type="InterPro" id="IPR002669">
    <property type="entry name" value="UreD"/>
</dbReference>
<dbReference type="PANTHER" id="PTHR33643">
    <property type="entry name" value="UREASE ACCESSORY PROTEIN D"/>
    <property type="match status" value="1"/>
</dbReference>
<dbReference type="PANTHER" id="PTHR33643:SF1">
    <property type="entry name" value="UREASE ACCESSORY PROTEIN D"/>
    <property type="match status" value="1"/>
</dbReference>
<dbReference type="Pfam" id="PF01774">
    <property type="entry name" value="UreD"/>
    <property type="match status" value="1"/>
</dbReference>